<feature type="chain" id="PRO_0000155970" description="dCTP deaminase">
    <location>
        <begin position="1"/>
        <end position="193"/>
    </location>
</feature>
<feature type="active site" description="Proton donor/acceptor" evidence="1">
    <location>
        <position position="138"/>
    </location>
</feature>
<feature type="binding site" evidence="1">
    <location>
        <begin position="110"/>
        <end position="115"/>
    </location>
    <ligand>
        <name>dCTP</name>
        <dbReference type="ChEBI" id="CHEBI:61481"/>
    </ligand>
</feature>
<feature type="binding site" evidence="1">
    <location>
        <position position="128"/>
    </location>
    <ligand>
        <name>dCTP</name>
        <dbReference type="ChEBI" id="CHEBI:61481"/>
    </ligand>
</feature>
<feature type="binding site" evidence="1">
    <location>
        <begin position="136"/>
        <end position="138"/>
    </location>
    <ligand>
        <name>dCTP</name>
        <dbReference type="ChEBI" id="CHEBI:61481"/>
    </ligand>
</feature>
<feature type="binding site" evidence="1">
    <location>
        <position position="171"/>
    </location>
    <ligand>
        <name>dCTP</name>
        <dbReference type="ChEBI" id="CHEBI:61481"/>
    </ligand>
</feature>
<feature type="binding site" evidence="1">
    <location>
        <position position="178"/>
    </location>
    <ligand>
        <name>dCTP</name>
        <dbReference type="ChEBI" id="CHEBI:61481"/>
    </ligand>
</feature>
<feature type="binding site" evidence="1">
    <location>
        <position position="182"/>
    </location>
    <ligand>
        <name>dCTP</name>
        <dbReference type="ChEBI" id="CHEBI:61481"/>
    </ligand>
</feature>
<sequence>MRLSDTDIEEWLSKKKLVIQPYPKKQLINGITVDIHLGNKFRFFYDHTTSCIDLSGSKEKIALDLNKIVSCETIFSKKEPFFLKPGALALFSTLENITLPNNLVGWLDGRSSLARLGLMVHVTSHRIDPGWHGNIVLEFFNAGKLTLVLTPGIKIAALSFELLSKPVLRPYNSRNESKYKRQNGVVPSRIYEE</sequence>
<name>DCD_BUCAP</name>
<evidence type="ECO:0000255" key="1">
    <source>
        <dbReference type="HAMAP-Rule" id="MF_00146"/>
    </source>
</evidence>
<accession>Q9ZHD8</accession>
<reference key="1">
    <citation type="journal article" date="1998" name="Curr. Microbiol.">
        <title>Buchnera aphidicola (Aphid endosymbiont) contains genes encoding enzymes of histidine biosynthesis.</title>
        <authorList>
            <person name="Clark M.A."/>
            <person name="Baumann L."/>
            <person name="Baumann P."/>
        </authorList>
    </citation>
    <scope>NUCLEOTIDE SEQUENCE [GENOMIC DNA]</scope>
</reference>
<reference key="2">
    <citation type="journal article" date="2002" name="Science">
        <title>50 million years of genomic stasis in endosymbiotic bacteria.</title>
        <authorList>
            <person name="Tamas I."/>
            <person name="Klasson L."/>
            <person name="Canbaeck B."/>
            <person name="Naeslund A.K."/>
            <person name="Eriksson A.-S."/>
            <person name="Wernegreen J.J."/>
            <person name="Sandstroem J.P."/>
            <person name="Moran N.A."/>
            <person name="Andersson S.G.E."/>
        </authorList>
    </citation>
    <scope>NUCLEOTIDE SEQUENCE [LARGE SCALE GENOMIC DNA]</scope>
    <source>
        <strain>Sg</strain>
    </source>
</reference>
<keyword id="KW-0378">Hydrolase</keyword>
<keyword id="KW-0546">Nucleotide metabolism</keyword>
<keyword id="KW-0547">Nucleotide-binding</keyword>
<proteinExistence type="inferred from homology"/>
<organism>
    <name type="scientific">Buchnera aphidicola subsp. Schizaphis graminum (strain Sg)</name>
    <dbReference type="NCBI Taxonomy" id="198804"/>
    <lineage>
        <taxon>Bacteria</taxon>
        <taxon>Pseudomonadati</taxon>
        <taxon>Pseudomonadota</taxon>
        <taxon>Gammaproteobacteria</taxon>
        <taxon>Enterobacterales</taxon>
        <taxon>Erwiniaceae</taxon>
        <taxon>Buchnera</taxon>
    </lineage>
</organism>
<protein>
    <recommendedName>
        <fullName evidence="1">dCTP deaminase</fullName>
        <ecNumber evidence="1">3.5.4.13</ecNumber>
    </recommendedName>
    <alternativeName>
        <fullName evidence="1">Deoxycytidine triphosphate deaminase</fullName>
    </alternativeName>
</protein>
<gene>
    <name evidence="1" type="primary">dcd</name>
    <name type="ordered locus">BUsg_101</name>
</gene>
<comment type="function">
    <text evidence="1">Catalyzes the deamination of dCTP to dUTP.</text>
</comment>
<comment type="catalytic activity">
    <reaction evidence="1">
        <text>dCTP + H2O + H(+) = dUTP + NH4(+)</text>
        <dbReference type="Rhea" id="RHEA:22680"/>
        <dbReference type="ChEBI" id="CHEBI:15377"/>
        <dbReference type="ChEBI" id="CHEBI:15378"/>
        <dbReference type="ChEBI" id="CHEBI:28938"/>
        <dbReference type="ChEBI" id="CHEBI:61481"/>
        <dbReference type="ChEBI" id="CHEBI:61555"/>
        <dbReference type="EC" id="3.5.4.13"/>
    </reaction>
</comment>
<comment type="pathway">
    <text evidence="1">Pyrimidine metabolism; dUMP biosynthesis; dUMP from dCTP (dUTP route): step 1/2.</text>
</comment>
<comment type="subunit">
    <text evidence="1">Homotrimer.</text>
</comment>
<comment type="similarity">
    <text evidence="1">Belongs to the dCTP deaminase family.</text>
</comment>
<dbReference type="EC" id="3.5.4.13" evidence="1"/>
<dbReference type="EMBL" id="AF067228">
    <property type="protein sequence ID" value="AAC97363.1"/>
    <property type="molecule type" value="Genomic_DNA"/>
</dbReference>
<dbReference type="EMBL" id="AE013218">
    <property type="protein sequence ID" value="AAM67671.1"/>
    <property type="molecule type" value="Genomic_DNA"/>
</dbReference>
<dbReference type="RefSeq" id="WP_011053637.1">
    <property type="nucleotide sequence ID" value="NC_004061.1"/>
</dbReference>
<dbReference type="SMR" id="Q9ZHD8"/>
<dbReference type="STRING" id="198804.BUsg_101"/>
<dbReference type="GeneID" id="93003570"/>
<dbReference type="KEGG" id="bas:BUsg_101"/>
<dbReference type="eggNOG" id="COG0717">
    <property type="taxonomic scope" value="Bacteria"/>
</dbReference>
<dbReference type="HOGENOM" id="CLU_087476_2_0_6"/>
<dbReference type="UniPathway" id="UPA00610">
    <property type="reaction ID" value="UER00665"/>
</dbReference>
<dbReference type="Proteomes" id="UP000000416">
    <property type="component" value="Chromosome"/>
</dbReference>
<dbReference type="GO" id="GO:0008829">
    <property type="term" value="F:dCTP deaminase activity"/>
    <property type="evidence" value="ECO:0007669"/>
    <property type="project" value="UniProtKB-UniRule"/>
</dbReference>
<dbReference type="GO" id="GO:0000166">
    <property type="term" value="F:nucleotide binding"/>
    <property type="evidence" value="ECO:0007669"/>
    <property type="project" value="UniProtKB-KW"/>
</dbReference>
<dbReference type="GO" id="GO:0006226">
    <property type="term" value="P:dUMP biosynthetic process"/>
    <property type="evidence" value="ECO:0007669"/>
    <property type="project" value="UniProtKB-UniPathway"/>
</dbReference>
<dbReference type="GO" id="GO:0006229">
    <property type="term" value="P:dUTP biosynthetic process"/>
    <property type="evidence" value="ECO:0007669"/>
    <property type="project" value="UniProtKB-UniRule"/>
</dbReference>
<dbReference type="GO" id="GO:0015949">
    <property type="term" value="P:nucleobase-containing small molecule interconversion"/>
    <property type="evidence" value="ECO:0007669"/>
    <property type="project" value="TreeGrafter"/>
</dbReference>
<dbReference type="CDD" id="cd07557">
    <property type="entry name" value="trimeric_dUTPase"/>
    <property type="match status" value="1"/>
</dbReference>
<dbReference type="Gene3D" id="2.70.40.10">
    <property type="match status" value="1"/>
</dbReference>
<dbReference type="HAMAP" id="MF_00146">
    <property type="entry name" value="dCTP_deaminase"/>
    <property type="match status" value="1"/>
</dbReference>
<dbReference type="InterPro" id="IPR011962">
    <property type="entry name" value="dCTP_deaminase"/>
</dbReference>
<dbReference type="InterPro" id="IPR036157">
    <property type="entry name" value="dUTPase-like_sf"/>
</dbReference>
<dbReference type="InterPro" id="IPR033704">
    <property type="entry name" value="dUTPase_trimeric"/>
</dbReference>
<dbReference type="NCBIfam" id="TIGR02274">
    <property type="entry name" value="dCTP_deam"/>
    <property type="match status" value="1"/>
</dbReference>
<dbReference type="PANTHER" id="PTHR42680">
    <property type="entry name" value="DCTP DEAMINASE"/>
    <property type="match status" value="1"/>
</dbReference>
<dbReference type="PANTHER" id="PTHR42680:SF3">
    <property type="entry name" value="DCTP DEAMINASE"/>
    <property type="match status" value="1"/>
</dbReference>
<dbReference type="Pfam" id="PF22769">
    <property type="entry name" value="DCD"/>
    <property type="match status" value="1"/>
</dbReference>
<dbReference type="SUPFAM" id="SSF51283">
    <property type="entry name" value="dUTPase-like"/>
    <property type="match status" value="1"/>
</dbReference>